<reference key="1">
    <citation type="journal article" date="2006" name="Proc. Natl. Acad. Sci. U.S.A.">
        <title>Highly conserved syntenic blocks at the vertebrate Hox loci and conserved regulatory elements within and outside Hox gene clusters.</title>
        <authorList>
            <person name="Lee A.P."/>
            <person name="Koh E.G.L."/>
            <person name="Tay A."/>
            <person name="Brenner S."/>
            <person name="Venkatesh B."/>
        </authorList>
    </citation>
    <scope>NUCLEOTIDE SEQUENCE [GENOMIC DNA]</scope>
</reference>
<feature type="chain" id="PRO_0000265992" description="Homeobox protein Hox-C12a">
    <location>
        <begin position="1"/>
        <end position="275"/>
    </location>
</feature>
<feature type="DNA-binding region" description="Homeobox" evidence="2">
    <location>
        <begin position="207"/>
        <end position="266"/>
    </location>
</feature>
<feature type="region of interest" description="Disordered" evidence="3">
    <location>
        <begin position="101"/>
        <end position="129"/>
    </location>
</feature>
<feature type="region of interest" description="Disordered" evidence="3">
    <location>
        <begin position="148"/>
        <end position="213"/>
    </location>
</feature>
<feature type="compositionally biased region" description="Low complexity" evidence="3">
    <location>
        <begin position="155"/>
        <end position="177"/>
    </location>
</feature>
<feature type="compositionally biased region" description="Polar residues" evidence="3">
    <location>
        <begin position="178"/>
        <end position="194"/>
    </location>
</feature>
<evidence type="ECO:0000250" key="1"/>
<evidence type="ECO:0000255" key="2">
    <source>
        <dbReference type="PROSITE-ProRule" id="PRU00108"/>
    </source>
</evidence>
<evidence type="ECO:0000256" key="3">
    <source>
        <dbReference type="SAM" id="MobiDB-lite"/>
    </source>
</evidence>
<evidence type="ECO:0000305" key="4"/>
<gene>
    <name type="primary">hoxc12a</name>
</gene>
<protein>
    <recommendedName>
        <fullName>Homeobox protein Hox-C12a</fullName>
    </recommendedName>
</protein>
<sequence length="275" mass="30735">MGEHNLLNPGFVGPLVNIHTGDTFYFPNFRPSGGQLPGLPSLSYPRRDNVCSLPWNPSEPCNGYSQSYFSSPVSINPSFNRSCEITRADDGKCYYNNGSGSRENCSGGGSLKREDRARDTSALTSDHGMHAGIGSTVAFSKYDYGTEQLTQDPPSCQSMESDSSSSLLNEASKPSSSDTQTLVSPGSHTGTITASGAAPWYPMHTRTRKKRKPYSKLQLAELEGEFMMNEFITRQRRRELSDRLNLSDQQVKIWFQNRRMKKKRLMLREQALAYF</sequence>
<accession>Q1KKV3</accession>
<comment type="function">
    <text evidence="1">Sequence-specific transcription factor which is part of a developmental regulatory system that provides cells with specific positional identities on the anterior-posterior axis.</text>
</comment>
<comment type="subcellular location">
    <subcellularLocation>
        <location evidence="2">Nucleus</location>
    </subcellularLocation>
</comment>
<comment type="similarity">
    <text evidence="4">Belongs to the Abd-B homeobox family.</text>
</comment>
<organism>
    <name type="scientific">Takifugu rubripes</name>
    <name type="common">Japanese pufferfish</name>
    <name type="synonym">Fugu rubripes</name>
    <dbReference type="NCBI Taxonomy" id="31033"/>
    <lineage>
        <taxon>Eukaryota</taxon>
        <taxon>Metazoa</taxon>
        <taxon>Chordata</taxon>
        <taxon>Craniata</taxon>
        <taxon>Vertebrata</taxon>
        <taxon>Euteleostomi</taxon>
        <taxon>Actinopterygii</taxon>
        <taxon>Neopterygii</taxon>
        <taxon>Teleostei</taxon>
        <taxon>Neoteleostei</taxon>
        <taxon>Acanthomorphata</taxon>
        <taxon>Eupercaria</taxon>
        <taxon>Tetraodontiformes</taxon>
        <taxon>Tetradontoidea</taxon>
        <taxon>Tetraodontidae</taxon>
        <taxon>Takifugu</taxon>
    </lineage>
</organism>
<proteinExistence type="inferred from homology"/>
<dbReference type="EMBL" id="DQ481667">
    <property type="protein sequence ID" value="ABF22441.1"/>
    <property type="molecule type" value="Genomic_DNA"/>
</dbReference>
<dbReference type="SMR" id="Q1KKV3"/>
<dbReference type="FunCoup" id="Q1KKV3">
    <property type="interactions" value="15"/>
</dbReference>
<dbReference type="STRING" id="31033.ENSTRUP00000010151"/>
<dbReference type="Ensembl" id="ENSTRUT00000010207.3">
    <property type="protein sequence ID" value="ENSTRUP00000010151.1"/>
    <property type="gene ID" value="ENSTRUG00000004280.3"/>
</dbReference>
<dbReference type="GeneID" id="101079504"/>
<dbReference type="KEGG" id="tru:101079504"/>
<dbReference type="CTD" id="562600"/>
<dbReference type="eggNOG" id="KOG0487">
    <property type="taxonomic scope" value="Eukaryota"/>
</dbReference>
<dbReference type="GeneTree" id="ENSGT00940000161307"/>
<dbReference type="InParanoid" id="Q1KKV3"/>
<dbReference type="OMA" id="DHGMHGG"/>
<dbReference type="OrthoDB" id="9886711at2759"/>
<dbReference type="TreeFam" id="TF351604"/>
<dbReference type="Proteomes" id="UP000005226">
    <property type="component" value="Chromosome 3"/>
</dbReference>
<dbReference type="GO" id="GO:0005634">
    <property type="term" value="C:nucleus"/>
    <property type="evidence" value="ECO:0007669"/>
    <property type="project" value="UniProtKB-SubCell"/>
</dbReference>
<dbReference type="GO" id="GO:0000981">
    <property type="term" value="F:DNA-binding transcription factor activity, RNA polymerase II-specific"/>
    <property type="evidence" value="ECO:0007669"/>
    <property type="project" value="InterPro"/>
</dbReference>
<dbReference type="GO" id="GO:1990837">
    <property type="term" value="F:sequence-specific double-stranded DNA binding"/>
    <property type="evidence" value="ECO:0007669"/>
    <property type="project" value="TreeGrafter"/>
</dbReference>
<dbReference type="CDD" id="cd00086">
    <property type="entry name" value="homeodomain"/>
    <property type="match status" value="1"/>
</dbReference>
<dbReference type="Gene3D" id="1.10.10.60">
    <property type="entry name" value="Homeodomain-like"/>
    <property type="match status" value="1"/>
</dbReference>
<dbReference type="InterPro" id="IPR001356">
    <property type="entry name" value="HD"/>
</dbReference>
<dbReference type="InterPro" id="IPR020479">
    <property type="entry name" value="HD_metazoa"/>
</dbReference>
<dbReference type="InterPro" id="IPR017970">
    <property type="entry name" value="Homeobox_CS"/>
</dbReference>
<dbReference type="InterPro" id="IPR009057">
    <property type="entry name" value="Homeodomain-like_sf"/>
</dbReference>
<dbReference type="PANTHER" id="PTHR46440:SF2">
    <property type="entry name" value="HOMEOBOX PROTEIN HOX-C12"/>
    <property type="match status" value="1"/>
</dbReference>
<dbReference type="PANTHER" id="PTHR46440">
    <property type="entry name" value="HOMEOBOX PROTEIN HOX-D12-RELATED"/>
    <property type="match status" value="1"/>
</dbReference>
<dbReference type="Pfam" id="PF00046">
    <property type="entry name" value="Homeodomain"/>
    <property type="match status" value="1"/>
</dbReference>
<dbReference type="PRINTS" id="PR00024">
    <property type="entry name" value="HOMEOBOX"/>
</dbReference>
<dbReference type="SMART" id="SM00389">
    <property type="entry name" value="HOX"/>
    <property type="match status" value="1"/>
</dbReference>
<dbReference type="SUPFAM" id="SSF46689">
    <property type="entry name" value="Homeodomain-like"/>
    <property type="match status" value="1"/>
</dbReference>
<dbReference type="PROSITE" id="PS00027">
    <property type="entry name" value="HOMEOBOX_1"/>
    <property type="match status" value="1"/>
</dbReference>
<dbReference type="PROSITE" id="PS50071">
    <property type="entry name" value="HOMEOBOX_2"/>
    <property type="match status" value="1"/>
</dbReference>
<keyword id="KW-0217">Developmental protein</keyword>
<keyword id="KW-0238">DNA-binding</keyword>
<keyword id="KW-0371">Homeobox</keyword>
<keyword id="KW-0539">Nucleus</keyword>
<keyword id="KW-1185">Reference proteome</keyword>
<keyword id="KW-0804">Transcription</keyword>
<keyword id="KW-0805">Transcription regulation</keyword>
<name>HXCCA_TAKRU</name>